<organism>
    <name type="scientific">Haemophilus influenzae (strain PittGG)</name>
    <dbReference type="NCBI Taxonomy" id="374931"/>
    <lineage>
        <taxon>Bacteria</taxon>
        <taxon>Pseudomonadati</taxon>
        <taxon>Pseudomonadota</taxon>
        <taxon>Gammaproteobacteria</taxon>
        <taxon>Pasteurellales</taxon>
        <taxon>Pasteurellaceae</taxon>
        <taxon>Haemophilus</taxon>
    </lineage>
</organism>
<comment type="function">
    <text evidence="1">Catalyzes the condensation of ATP and 5-phosphoribose 1-diphosphate to form N'-(5'-phosphoribosyl)-ATP (PR-ATP). Has a crucial role in the pathway because the rate of histidine biosynthesis seems to be controlled primarily by regulation of HisG enzymatic activity.</text>
</comment>
<comment type="catalytic activity">
    <reaction evidence="1">
        <text>1-(5-phospho-beta-D-ribosyl)-ATP + diphosphate = 5-phospho-alpha-D-ribose 1-diphosphate + ATP</text>
        <dbReference type="Rhea" id="RHEA:18473"/>
        <dbReference type="ChEBI" id="CHEBI:30616"/>
        <dbReference type="ChEBI" id="CHEBI:33019"/>
        <dbReference type="ChEBI" id="CHEBI:58017"/>
        <dbReference type="ChEBI" id="CHEBI:73183"/>
        <dbReference type="EC" id="2.4.2.17"/>
    </reaction>
</comment>
<comment type="cofactor">
    <cofactor evidence="1">
        <name>Mg(2+)</name>
        <dbReference type="ChEBI" id="CHEBI:18420"/>
    </cofactor>
</comment>
<comment type="activity regulation">
    <text evidence="1">Feedback inhibited by histidine.</text>
</comment>
<comment type="pathway">
    <text evidence="1">Amino-acid biosynthesis; L-histidine biosynthesis; L-histidine from 5-phospho-alpha-D-ribose 1-diphosphate: step 1/9.</text>
</comment>
<comment type="subcellular location">
    <subcellularLocation>
        <location evidence="1">Cytoplasm</location>
    </subcellularLocation>
</comment>
<comment type="similarity">
    <text evidence="1">Belongs to the ATP phosphoribosyltransferase family. Long subfamily.</text>
</comment>
<keyword id="KW-0028">Amino-acid biosynthesis</keyword>
<keyword id="KW-0067">ATP-binding</keyword>
<keyword id="KW-0963">Cytoplasm</keyword>
<keyword id="KW-0328">Glycosyltransferase</keyword>
<keyword id="KW-0368">Histidine biosynthesis</keyword>
<keyword id="KW-0460">Magnesium</keyword>
<keyword id="KW-0479">Metal-binding</keyword>
<keyword id="KW-0547">Nucleotide-binding</keyword>
<keyword id="KW-0808">Transferase</keyword>
<accession>A5UGY0</accession>
<reference key="1">
    <citation type="journal article" date="2007" name="Genome Biol.">
        <title>Characterization and modeling of the Haemophilus influenzae core and supragenomes based on the complete genomic sequences of Rd and 12 clinical nontypeable strains.</title>
        <authorList>
            <person name="Hogg J.S."/>
            <person name="Hu F.Z."/>
            <person name="Janto B."/>
            <person name="Boissy R."/>
            <person name="Hayes J."/>
            <person name="Keefe R."/>
            <person name="Post J.C."/>
            <person name="Ehrlich G.D."/>
        </authorList>
    </citation>
    <scope>NUCLEOTIDE SEQUENCE [LARGE SCALE GENOMIC DNA]</scope>
    <source>
        <strain>PittGG</strain>
    </source>
</reference>
<feature type="chain" id="PRO_1000004464" description="ATP phosphoribosyltransferase">
    <location>
        <begin position="1"/>
        <end position="303"/>
    </location>
</feature>
<name>HIS1_HAEIG</name>
<protein>
    <recommendedName>
        <fullName evidence="1">ATP phosphoribosyltransferase</fullName>
        <shortName evidence="1">ATP-PRT</shortName>
        <shortName evidence="1">ATP-PRTase</shortName>
        <ecNumber evidence="1">2.4.2.17</ecNumber>
    </recommendedName>
</protein>
<proteinExistence type="inferred from homology"/>
<gene>
    <name evidence="1" type="primary">hisG</name>
    <name type="ordered locus">CGSHiGG_05585</name>
</gene>
<dbReference type="EC" id="2.4.2.17" evidence="1"/>
<dbReference type="EMBL" id="CP000672">
    <property type="protein sequence ID" value="ABR00036.1"/>
    <property type="molecule type" value="Genomic_DNA"/>
</dbReference>
<dbReference type="SMR" id="A5UGY0"/>
<dbReference type="KEGG" id="hiq:CGSHiGG_05585"/>
<dbReference type="HOGENOM" id="CLU_038115_1_0_6"/>
<dbReference type="UniPathway" id="UPA00031">
    <property type="reaction ID" value="UER00006"/>
</dbReference>
<dbReference type="Proteomes" id="UP000001990">
    <property type="component" value="Chromosome"/>
</dbReference>
<dbReference type="GO" id="GO:0005737">
    <property type="term" value="C:cytoplasm"/>
    <property type="evidence" value="ECO:0007669"/>
    <property type="project" value="UniProtKB-SubCell"/>
</dbReference>
<dbReference type="GO" id="GO:0005524">
    <property type="term" value="F:ATP binding"/>
    <property type="evidence" value="ECO:0007669"/>
    <property type="project" value="UniProtKB-KW"/>
</dbReference>
<dbReference type="GO" id="GO:0003879">
    <property type="term" value="F:ATP phosphoribosyltransferase activity"/>
    <property type="evidence" value="ECO:0007669"/>
    <property type="project" value="UniProtKB-UniRule"/>
</dbReference>
<dbReference type="GO" id="GO:0000287">
    <property type="term" value="F:magnesium ion binding"/>
    <property type="evidence" value="ECO:0007669"/>
    <property type="project" value="UniProtKB-UniRule"/>
</dbReference>
<dbReference type="GO" id="GO:0000105">
    <property type="term" value="P:L-histidine biosynthetic process"/>
    <property type="evidence" value="ECO:0007669"/>
    <property type="project" value="UniProtKB-UniRule"/>
</dbReference>
<dbReference type="FunFam" id="3.30.70.120:FF:000002">
    <property type="entry name" value="ATP phosphoribosyltransferase"/>
    <property type="match status" value="1"/>
</dbReference>
<dbReference type="FunFam" id="3.40.190.10:FF:000008">
    <property type="entry name" value="ATP phosphoribosyltransferase"/>
    <property type="match status" value="1"/>
</dbReference>
<dbReference type="Gene3D" id="3.30.70.120">
    <property type="match status" value="1"/>
</dbReference>
<dbReference type="Gene3D" id="3.40.190.10">
    <property type="entry name" value="Periplasmic binding protein-like II"/>
    <property type="match status" value="2"/>
</dbReference>
<dbReference type="HAMAP" id="MF_00079">
    <property type="entry name" value="HisG_Long"/>
    <property type="match status" value="1"/>
</dbReference>
<dbReference type="InterPro" id="IPR020621">
    <property type="entry name" value="ATP-PRT_HisG_long"/>
</dbReference>
<dbReference type="InterPro" id="IPR013820">
    <property type="entry name" value="ATP_PRibTrfase_cat"/>
</dbReference>
<dbReference type="InterPro" id="IPR018198">
    <property type="entry name" value="ATP_PRibTrfase_CS"/>
</dbReference>
<dbReference type="InterPro" id="IPR001348">
    <property type="entry name" value="ATP_PRibTrfase_HisG"/>
</dbReference>
<dbReference type="InterPro" id="IPR013115">
    <property type="entry name" value="HisG_C"/>
</dbReference>
<dbReference type="InterPro" id="IPR011322">
    <property type="entry name" value="N-reg_PII-like_a/b"/>
</dbReference>
<dbReference type="InterPro" id="IPR015867">
    <property type="entry name" value="N-reg_PII/ATP_PRibTrfase_C"/>
</dbReference>
<dbReference type="NCBIfam" id="TIGR00070">
    <property type="entry name" value="hisG"/>
    <property type="match status" value="1"/>
</dbReference>
<dbReference type="NCBIfam" id="TIGR03455">
    <property type="entry name" value="HisG_C-term"/>
    <property type="match status" value="1"/>
</dbReference>
<dbReference type="PANTHER" id="PTHR21403:SF8">
    <property type="entry name" value="ATP PHOSPHORIBOSYLTRANSFERASE"/>
    <property type="match status" value="1"/>
</dbReference>
<dbReference type="PANTHER" id="PTHR21403">
    <property type="entry name" value="ATP PHOSPHORIBOSYLTRANSFERASE ATP-PRTASE"/>
    <property type="match status" value="1"/>
</dbReference>
<dbReference type="Pfam" id="PF01634">
    <property type="entry name" value="HisG"/>
    <property type="match status" value="1"/>
</dbReference>
<dbReference type="Pfam" id="PF08029">
    <property type="entry name" value="HisG_C"/>
    <property type="match status" value="1"/>
</dbReference>
<dbReference type="SUPFAM" id="SSF54913">
    <property type="entry name" value="GlnB-like"/>
    <property type="match status" value="1"/>
</dbReference>
<dbReference type="SUPFAM" id="SSF53850">
    <property type="entry name" value="Periplasmic binding protein-like II"/>
    <property type="match status" value="1"/>
</dbReference>
<dbReference type="PROSITE" id="PS01316">
    <property type="entry name" value="ATP_P_PHORIBOSYLTR"/>
    <property type="match status" value="1"/>
</dbReference>
<evidence type="ECO:0000255" key="1">
    <source>
        <dbReference type="HAMAP-Rule" id="MF_00079"/>
    </source>
</evidence>
<sequence length="303" mass="33810">MTNTTMQPNRLRIALQRKGRLSQDCAILLKQCGVKINWNEQRLIAYAENLPIEILRVRDDDIPGLIFDGVVDLGIIGENVLEEEELGRRAANETVTYKKLCQLDFGDCRLSLAVDRDCHYENVKDLANRRIATSYPHLLKRYMNENGVSFKSCLLNGSVEVAPSAGIAYAICDLVSSGATLEANGLKEVDVIYRSKACLIQRAEPLESTKQALVDKLLTRIQGVQQAAESKYIMLHAPKEKLEKITALLPGVENPTILPLATDTTRVAMHVVSQENLFWETMEQLKEAGASSILVLPIEKMME</sequence>